<protein>
    <recommendedName>
        <fullName>Putative membrane protein ORF10</fullName>
    </recommendedName>
</protein>
<feature type="chain" id="PRO_0000222096" description="Putative membrane protein ORF10">
    <location>
        <begin position="1"/>
        <end position="151"/>
    </location>
</feature>
<feature type="transmembrane region" description="Helical" evidence="1">
    <location>
        <begin position="7"/>
        <end position="23"/>
    </location>
</feature>
<feature type="transmembrane region" description="Helical" evidence="1">
    <location>
        <begin position="107"/>
        <end position="123"/>
    </location>
</feature>
<proteinExistence type="predicted"/>
<keyword id="KW-0472">Membrane</keyword>
<keyword id="KW-1185">Reference proteome</keyword>
<keyword id="KW-0812">Transmembrane</keyword>
<keyword id="KW-1133">Transmembrane helix</keyword>
<evidence type="ECO:0000255" key="1"/>
<evidence type="ECO:0000305" key="2"/>
<organism>
    <name type="scientific">Ictalurid herpesvirus 1 (strain Auburn)</name>
    <name type="common">IcHV-1</name>
    <name type="synonym">Channel catfish herpesvirus</name>
    <dbReference type="NCBI Taxonomy" id="766178"/>
    <lineage>
        <taxon>Viruses</taxon>
        <taxon>Duplodnaviria</taxon>
        <taxon>Heunggongvirae</taxon>
        <taxon>Peploviricota</taxon>
        <taxon>Herviviricetes</taxon>
        <taxon>Herpesvirales</taxon>
        <taxon>Alloherpesviridae</taxon>
        <taxon>Ictavirus</taxon>
        <taxon>Ictavirus ictaluridallo1</taxon>
        <taxon>Ictalurid herpesvirus 1</taxon>
    </lineage>
</organism>
<gene>
    <name type="primary">ORF10</name>
</gene>
<name>VG10_ICHVA</name>
<dbReference type="EMBL" id="M75136">
    <property type="protein sequence ID" value="AAA88191.1"/>
    <property type="molecule type" value="Genomic_DNA"/>
</dbReference>
<dbReference type="EMBL" id="M75136">
    <property type="protein sequence ID" value="AAA88113.1"/>
    <property type="molecule type" value="Genomic_DNA"/>
</dbReference>
<dbReference type="PIR" id="B36787">
    <property type="entry name" value="MMBEI4"/>
</dbReference>
<dbReference type="KEGG" id="vg:1488373"/>
<dbReference type="KEGG" id="vg:1488422"/>
<dbReference type="Proteomes" id="UP000007643">
    <property type="component" value="Segment"/>
</dbReference>
<dbReference type="GO" id="GO:0016020">
    <property type="term" value="C:membrane"/>
    <property type="evidence" value="ECO:0007669"/>
    <property type="project" value="UniProtKB-SubCell"/>
</dbReference>
<accession>Q00134</accession>
<organismHost>
    <name type="scientific">Ictaluridae</name>
    <name type="common">bullhead catfishes</name>
    <dbReference type="NCBI Taxonomy" id="7996"/>
</organismHost>
<reference key="1">
    <citation type="journal article" date="1992" name="Virology">
        <title>Channel catfish virus: a new type of herpesvirus.</title>
        <authorList>
            <person name="Davison A.J."/>
        </authorList>
    </citation>
    <scope>NUCLEOTIDE SEQUENCE [LARGE SCALE GENOMIC DNA]</scope>
</reference>
<sequence length="151" mass="15933">MTVKGCLCLAFGVTLIVIVGVVVAMGVALSKGRAPGDDLVTLALNELAGDEDVVGRLSDAGAANLTGLLRGLILDHLSRNSSGLVAADALYERVLTRLRLDIFVFNGLVAAFNGFWLSFIIMYTCARTVRSGKKVAPAPIHSPPTMMSPYI</sequence>
<comment type="subcellular location">
    <subcellularLocation>
        <location evidence="2">Membrane</location>
        <topology evidence="2">Multi-pass membrane protein</topology>
    </subcellularLocation>
</comment>